<organism>
    <name type="scientific">Methanothermobacter thermautotrophicus (strain ATCC 29096 / DSM 1053 / JCM 10044 / NBRC 100330 / Delta H)</name>
    <name type="common">Methanobacterium thermoautotrophicum</name>
    <dbReference type="NCBI Taxonomy" id="187420"/>
    <lineage>
        <taxon>Archaea</taxon>
        <taxon>Methanobacteriati</taxon>
        <taxon>Methanobacteriota</taxon>
        <taxon>Methanomada group</taxon>
        <taxon>Methanobacteria</taxon>
        <taxon>Methanobacteriales</taxon>
        <taxon>Methanobacteriaceae</taxon>
        <taxon>Methanothermobacter</taxon>
    </lineage>
</organism>
<keyword id="KW-0521">NADP</keyword>
<keyword id="KW-0560">Oxidoreductase</keyword>
<keyword id="KW-0627">Porphyrin biosynthesis</keyword>
<keyword id="KW-1185">Reference proteome</keyword>
<sequence length="402" mass="44941">MLQVILNIRLDHKTSDVKTMESSHERMEAIVAELESSGTVMEKVPIRTCNRIEYYLSVQEIPPGFEFDGFTVEGDEDALRHILRLASGLESMIIGEDQILGQIKAARVQALREGTCGPVLDMVFTKAVHVGQTVRRKTQINRGSVSIGSAAVDLAESIHGDLKCRKVLAIGAGKMGTLVARALAEKHLSAIMVANRTYERAYQLACELGGDAIHFDRLNRALRDADVVISATGSPHYILTRERVRDAIPPERRSAVVMVDIANPRDIEESVRELGIRLFTIDDLRGVAEENRRRREAEAREAERIVEGELKLLLRSLKHMEVEPLLAEVRGNMESLRRREAERALNKIMNSSDPEGVIEALSRSIVDKIFHDIAISIRQAAERGDEEFLSMCAKLFNCKDLK</sequence>
<protein>
    <recommendedName>
        <fullName evidence="1">Glutamyl-tRNA reductase</fullName>
        <shortName evidence="1">GluTR</shortName>
        <ecNumber evidence="1">1.2.1.70</ecNumber>
    </recommendedName>
</protein>
<evidence type="ECO:0000255" key="1">
    <source>
        <dbReference type="HAMAP-Rule" id="MF_00087"/>
    </source>
</evidence>
<gene>
    <name evidence="1" type="primary">hemA</name>
    <name type="ordered locus">MTH_1012</name>
</gene>
<proteinExistence type="inferred from homology"/>
<name>HEM1_METTH</name>
<feature type="chain" id="PRO_0000114105" description="Glutamyl-tRNA reductase">
    <location>
        <begin position="1"/>
        <end position="402"/>
    </location>
</feature>
<feature type="active site" description="Nucleophile" evidence="1">
    <location>
        <position position="49"/>
    </location>
</feature>
<feature type="binding site" evidence="1">
    <location>
        <begin position="48"/>
        <end position="51"/>
    </location>
    <ligand>
        <name>substrate</name>
    </ligand>
</feature>
<feature type="binding site" evidence="1">
    <location>
        <position position="91"/>
    </location>
    <ligand>
        <name>substrate</name>
    </ligand>
</feature>
<feature type="binding site" evidence="1">
    <location>
        <begin position="96"/>
        <end position="98"/>
    </location>
    <ligand>
        <name>substrate</name>
    </ligand>
</feature>
<feature type="binding site" evidence="1">
    <location>
        <position position="102"/>
    </location>
    <ligand>
        <name>substrate</name>
    </ligand>
</feature>
<feature type="binding site" evidence="1">
    <location>
        <begin position="171"/>
        <end position="176"/>
    </location>
    <ligand>
        <name>NADP(+)</name>
        <dbReference type="ChEBI" id="CHEBI:58349"/>
    </ligand>
</feature>
<feature type="site" description="Important for activity" evidence="1">
    <location>
        <position position="81"/>
    </location>
</feature>
<reference key="1">
    <citation type="journal article" date="1997" name="J. Bacteriol.">
        <title>Complete genome sequence of Methanobacterium thermoautotrophicum deltaH: functional analysis and comparative genomics.</title>
        <authorList>
            <person name="Smith D.R."/>
            <person name="Doucette-Stamm L.A."/>
            <person name="Deloughery C."/>
            <person name="Lee H.-M."/>
            <person name="Dubois J."/>
            <person name="Aldredge T."/>
            <person name="Bashirzadeh R."/>
            <person name="Blakely D."/>
            <person name="Cook R."/>
            <person name="Gilbert K."/>
            <person name="Harrison D."/>
            <person name="Hoang L."/>
            <person name="Keagle P."/>
            <person name="Lumm W."/>
            <person name="Pothier B."/>
            <person name="Qiu D."/>
            <person name="Spadafora R."/>
            <person name="Vicare R."/>
            <person name="Wang Y."/>
            <person name="Wierzbowski J."/>
            <person name="Gibson R."/>
            <person name="Jiwani N."/>
            <person name="Caruso A."/>
            <person name="Bush D."/>
            <person name="Safer H."/>
            <person name="Patwell D."/>
            <person name="Prabhakar S."/>
            <person name="McDougall S."/>
            <person name="Shimer G."/>
            <person name="Goyal A."/>
            <person name="Pietrovski S."/>
            <person name="Church G.M."/>
            <person name="Daniels C.J."/>
            <person name="Mao J.-I."/>
            <person name="Rice P."/>
            <person name="Noelling J."/>
            <person name="Reeve J.N."/>
        </authorList>
    </citation>
    <scope>NUCLEOTIDE SEQUENCE [LARGE SCALE GENOMIC DNA]</scope>
    <source>
        <strain>ATCC 29096 / DSM 1053 / JCM 10044 / NBRC 100330 / Delta H</strain>
    </source>
</reference>
<dbReference type="EC" id="1.2.1.70" evidence="1"/>
<dbReference type="EMBL" id="AE000666">
    <property type="protein sequence ID" value="AAB85508.1"/>
    <property type="molecule type" value="Genomic_DNA"/>
</dbReference>
<dbReference type="PIR" id="A69002">
    <property type="entry name" value="A69002"/>
</dbReference>
<dbReference type="SMR" id="O27093"/>
<dbReference type="FunCoup" id="O27093">
    <property type="interactions" value="102"/>
</dbReference>
<dbReference type="STRING" id="187420.MTH_1012"/>
<dbReference type="PaxDb" id="187420-MTH_1012"/>
<dbReference type="EnsemblBacteria" id="AAB85508">
    <property type="protein sequence ID" value="AAB85508"/>
    <property type="gene ID" value="MTH_1012"/>
</dbReference>
<dbReference type="KEGG" id="mth:MTH_1012"/>
<dbReference type="PATRIC" id="fig|187420.15.peg.995"/>
<dbReference type="HOGENOM" id="CLU_035113_0_0_2"/>
<dbReference type="InParanoid" id="O27093"/>
<dbReference type="UniPathway" id="UPA00251">
    <property type="reaction ID" value="UER00316"/>
</dbReference>
<dbReference type="Proteomes" id="UP000005223">
    <property type="component" value="Chromosome"/>
</dbReference>
<dbReference type="GO" id="GO:0008883">
    <property type="term" value="F:glutamyl-tRNA reductase activity"/>
    <property type="evidence" value="ECO:0007669"/>
    <property type="project" value="UniProtKB-UniRule"/>
</dbReference>
<dbReference type="GO" id="GO:0050661">
    <property type="term" value="F:NADP binding"/>
    <property type="evidence" value="ECO:0007669"/>
    <property type="project" value="InterPro"/>
</dbReference>
<dbReference type="GO" id="GO:0019353">
    <property type="term" value="P:protoporphyrinogen IX biosynthetic process from glutamate"/>
    <property type="evidence" value="ECO:0007669"/>
    <property type="project" value="TreeGrafter"/>
</dbReference>
<dbReference type="CDD" id="cd05213">
    <property type="entry name" value="NAD_bind_Glutamyl_tRNA_reduct"/>
    <property type="match status" value="1"/>
</dbReference>
<dbReference type="FunFam" id="3.40.50.720:FF:000031">
    <property type="entry name" value="Glutamyl-tRNA reductase"/>
    <property type="match status" value="1"/>
</dbReference>
<dbReference type="Gene3D" id="3.30.460.30">
    <property type="entry name" value="Glutamyl-tRNA reductase, N-terminal domain"/>
    <property type="match status" value="1"/>
</dbReference>
<dbReference type="Gene3D" id="3.40.50.720">
    <property type="entry name" value="NAD(P)-binding Rossmann-like Domain"/>
    <property type="match status" value="1"/>
</dbReference>
<dbReference type="HAMAP" id="MF_00087">
    <property type="entry name" value="Glu_tRNA_reductase"/>
    <property type="match status" value="1"/>
</dbReference>
<dbReference type="InterPro" id="IPR000343">
    <property type="entry name" value="4pyrrol_synth_GluRdtase"/>
</dbReference>
<dbReference type="InterPro" id="IPR015896">
    <property type="entry name" value="4pyrrol_synth_GluRdtase_dimer"/>
</dbReference>
<dbReference type="InterPro" id="IPR015895">
    <property type="entry name" value="4pyrrol_synth_GluRdtase_N"/>
</dbReference>
<dbReference type="InterPro" id="IPR018214">
    <property type="entry name" value="GluRdtase_CS"/>
</dbReference>
<dbReference type="InterPro" id="IPR036453">
    <property type="entry name" value="GluRdtase_dimer_dom_sf"/>
</dbReference>
<dbReference type="InterPro" id="IPR036343">
    <property type="entry name" value="GluRdtase_N_sf"/>
</dbReference>
<dbReference type="InterPro" id="IPR036291">
    <property type="entry name" value="NAD(P)-bd_dom_sf"/>
</dbReference>
<dbReference type="InterPro" id="IPR006151">
    <property type="entry name" value="Shikm_DH/Glu-tRNA_Rdtase"/>
</dbReference>
<dbReference type="NCBIfam" id="TIGR01035">
    <property type="entry name" value="hemA"/>
    <property type="match status" value="1"/>
</dbReference>
<dbReference type="PANTHER" id="PTHR43013">
    <property type="entry name" value="GLUTAMYL-TRNA REDUCTASE"/>
    <property type="match status" value="1"/>
</dbReference>
<dbReference type="PANTHER" id="PTHR43013:SF1">
    <property type="entry name" value="GLUTAMYL-TRNA REDUCTASE"/>
    <property type="match status" value="1"/>
</dbReference>
<dbReference type="Pfam" id="PF00745">
    <property type="entry name" value="GlutR_dimer"/>
    <property type="match status" value="1"/>
</dbReference>
<dbReference type="Pfam" id="PF05201">
    <property type="entry name" value="GlutR_N"/>
    <property type="match status" value="1"/>
</dbReference>
<dbReference type="Pfam" id="PF01488">
    <property type="entry name" value="Shikimate_DH"/>
    <property type="match status" value="1"/>
</dbReference>
<dbReference type="PIRSF" id="PIRSF000445">
    <property type="entry name" value="4pyrrol_synth_GluRdtase"/>
    <property type="match status" value="1"/>
</dbReference>
<dbReference type="SUPFAM" id="SSF69742">
    <property type="entry name" value="Glutamyl tRNA-reductase catalytic, N-terminal domain"/>
    <property type="match status" value="1"/>
</dbReference>
<dbReference type="SUPFAM" id="SSF69075">
    <property type="entry name" value="Glutamyl tRNA-reductase dimerization domain"/>
    <property type="match status" value="1"/>
</dbReference>
<dbReference type="SUPFAM" id="SSF51735">
    <property type="entry name" value="NAD(P)-binding Rossmann-fold domains"/>
    <property type="match status" value="1"/>
</dbReference>
<dbReference type="PROSITE" id="PS00747">
    <property type="entry name" value="GLUTR"/>
    <property type="match status" value="1"/>
</dbReference>
<accession>O27093</accession>
<comment type="function">
    <text evidence="1">Catalyzes the NADPH-dependent reduction of glutamyl-tRNA(Glu) to glutamate 1-semialdehyde (GSA).</text>
</comment>
<comment type="catalytic activity">
    <reaction evidence="1">
        <text>(S)-4-amino-5-oxopentanoate + tRNA(Glu) + NADP(+) = L-glutamyl-tRNA(Glu) + NADPH + H(+)</text>
        <dbReference type="Rhea" id="RHEA:12344"/>
        <dbReference type="Rhea" id="RHEA-COMP:9663"/>
        <dbReference type="Rhea" id="RHEA-COMP:9680"/>
        <dbReference type="ChEBI" id="CHEBI:15378"/>
        <dbReference type="ChEBI" id="CHEBI:57501"/>
        <dbReference type="ChEBI" id="CHEBI:57783"/>
        <dbReference type="ChEBI" id="CHEBI:58349"/>
        <dbReference type="ChEBI" id="CHEBI:78442"/>
        <dbReference type="ChEBI" id="CHEBI:78520"/>
        <dbReference type="EC" id="1.2.1.70"/>
    </reaction>
</comment>
<comment type="pathway">
    <text evidence="1">Porphyrin-containing compound metabolism; protoporphyrin-IX biosynthesis; 5-aminolevulinate from L-glutamyl-tRNA(Glu): step 1/2.</text>
</comment>
<comment type="subunit">
    <text evidence="1">Homodimer.</text>
</comment>
<comment type="domain">
    <text evidence="1">Possesses an unusual extended V-shaped dimeric structure with each monomer consisting of three distinct domains arranged along a curved 'spinal' alpha-helix. The N-terminal catalytic domain specifically recognizes the glutamate moiety of the substrate. The second domain is the NADPH-binding domain, and the third C-terminal domain is responsible for dimerization.</text>
</comment>
<comment type="miscellaneous">
    <text evidence="1">During catalysis, the active site Cys acts as a nucleophile attacking the alpha-carbonyl group of tRNA-bound glutamate with the formation of a thioester intermediate between enzyme and glutamate, and the concomitant release of tRNA(Glu). The thioester intermediate is finally reduced by direct hydride transfer from NADPH, to form the product GSA.</text>
</comment>
<comment type="similarity">
    <text evidence="1">Belongs to the glutamyl-tRNA reductase family.</text>
</comment>